<evidence type="ECO:0000250" key="1">
    <source>
        <dbReference type="UniProtKB" id="Q9N623"/>
    </source>
</evidence>
<evidence type="ECO:0000250" key="2">
    <source>
        <dbReference type="UniProtKB" id="W7FI62"/>
    </source>
</evidence>
<evidence type="ECO:0000255" key="3"/>
<evidence type="ECO:0000305" key="4"/>
<name>CRT_PLAYO</name>
<reference key="1">
    <citation type="journal article" date="2002" name="Nature">
        <title>Genome sequence and comparative analysis of the model rodent malaria parasite Plasmodium yoelii yoelii.</title>
        <authorList>
            <person name="Carlton J.M."/>
            <person name="Angiuoli S.V."/>
            <person name="Suh B.B."/>
            <person name="Kooij T.W."/>
            <person name="Pertea M."/>
            <person name="Silva J.C."/>
            <person name="Ermolaeva M.D."/>
            <person name="Allen J.E."/>
            <person name="Selengut J.D."/>
            <person name="Koo H.L."/>
            <person name="Peterson J.D."/>
            <person name="Pop M."/>
            <person name="Kosack D.S."/>
            <person name="Shumway M.F."/>
            <person name="Bidwell S.L."/>
            <person name="Shallom S.J."/>
            <person name="van Aken S.E."/>
            <person name="Riedmuller S.B."/>
            <person name="Feldblyum T.V."/>
            <person name="Cho J.K."/>
            <person name="Quackenbush J."/>
            <person name="Sedegah M."/>
            <person name="Shoaibi A."/>
            <person name="Cummings L.M."/>
            <person name="Florens L."/>
            <person name="Yates J.R. III"/>
            <person name="Raine J.D."/>
            <person name="Sinden R.E."/>
            <person name="Harris M.A."/>
            <person name="Cunningham D.A."/>
            <person name="Preiser P.R."/>
            <person name="Bergman L.W."/>
            <person name="Vaidya A.B."/>
            <person name="van Lin L.H."/>
            <person name="Janse C.J."/>
            <person name="Waters A.P."/>
            <person name="Smith H.O."/>
            <person name="White O.R."/>
            <person name="Salzberg S.L."/>
            <person name="Venter J.C."/>
            <person name="Fraser C.M."/>
            <person name="Hoffman S.L."/>
            <person name="Gardner M.J."/>
            <person name="Carucci D.J."/>
        </authorList>
    </citation>
    <scope>NUCLEOTIDE SEQUENCE [LARGE SCALE GENOMIC DNA]</scope>
    <source>
        <strain>17XNL</strain>
    </source>
</reference>
<keyword id="KW-0029">Amino-acid transport</keyword>
<keyword id="KW-1015">Disulfide bond</keyword>
<keyword id="KW-0325">Glycoprotein</keyword>
<keyword id="KW-0472">Membrane</keyword>
<keyword id="KW-1185">Reference proteome</keyword>
<keyword id="KW-0812">Transmembrane</keyword>
<keyword id="KW-1133">Transmembrane helix</keyword>
<keyword id="KW-0813">Transport</keyword>
<keyword id="KW-0926">Vacuole</keyword>
<proteinExistence type="inferred from homology"/>
<gene>
    <name evidence="4" type="primary">CRT</name>
    <name type="synonym">CG10</name>
    <name type="ORF">PY05061</name>
</gene>
<feature type="chain" id="PRO_0000385361" description="Putative chloroquine resistance transporter">
    <location>
        <begin position="1"/>
        <end position="424"/>
    </location>
</feature>
<feature type="topological domain" description="Cytoplasmic" evidence="4">
    <location>
        <begin position="1"/>
        <end position="56"/>
    </location>
</feature>
<feature type="transmembrane region" description="Helical" evidence="3">
    <location>
        <begin position="57"/>
        <end position="77"/>
    </location>
</feature>
<feature type="topological domain" description="Vacuolar" evidence="4">
    <location>
        <begin position="78"/>
        <end position="88"/>
    </location>
</feature>
<feature type="transmembrane region" description="Helical" evidence="3">
    <location>
        <begin position="89"/>
        <end position="109"/>
    </location>
</feature>
<feature type="topological domain" description="Cytoplasmic" evidence="4">
    <location>
        <begin position="110"/>
        <end position="125"/>
    </location>
</feature>
<feature type="transmembrane region" description="Helical" evidence="3">
    <location>
        <begin position="126"/>
        <end position="146"/>
    </location>
</feature>
<feature type="topological domain" description="Vacuolar" evidence="4">
    <location>
        <begin position="147"/>
        <end position="156"/>
    </location>
</feature>
<feature type="transmembrane region" description="Helical" evidence="3">
    <location>
        <begin position="157"/>
        <end position="177"/>
    </location>
</feature>
<feature type="topological domain" description="Cytoplasmic" evidence="4">
    <location>
        <begin position="178"/>
        <end position="180"/>
    </location>
</feature>
<feature type="transmembrane region" description="Helical" evidence="3">
    <location>
        <begin position="181"/>
        <end position="201"/>
    </location>
</feature>
<feature type="topological domain" description="Vacuolar" evidence="4">
    <location>
        <begin position="202"/>
        <end position="209"/>
    </location>
</feature>
<feature type="transmembrane region" description="Helical" evidence="3">
    <location>
        <begin position="210"/>
        <end position="230"/>
    </location>
</feature>
<feature type="topological domain" description="Cytoplasmic" evidence="4">
    <location>
        <begin position="231"/>
        <end position="248"/>
    </location>
</feature>
<feature type="transmembrane region" description="Helical" evidence="3">
    <location>
        <begin position="249"/>
        <end position="269"/>
    </location>
</feature>
<feature type="topological domain" description="Vacuolar" evidence="4">
    <location>
        <begin position="270"/>
        <end position="317"/>
    </location>
</feature>
<feature type="transmembrane region" description="Helical" evidence="3">
    <location>
        <begin position="318"/>
        <end position="338"/>
    </location>
</feature>
<feature type="topological domain" description="Cytoplasmic" evidence="4">
    <location>
        <begin position="339"/>
        <end position="346"/>
    </location>
</feature>
<feature type="transmembrane region" description="Helical" evidence="3">
    <location>
        <begin position="347"/>
        <end position="367"/>
    </location>
</feature>
<feature type="topological domain" description="Vacuolar" evidence="4">
    <location>
        <begin position="368"/>
        <end position="377"/>
    </location>
</feature>
<feature type="transmembrane region" description="Helical" evidence="3">
    <location>
        <begin position="378"/>
        <end position="398"/>
    </location>
</feature>
<feature type="topological domain" description="Cytoplasmic" evidence="4">
    <location>
        <begin position="399"/>
        <end position="424"/>
    </location>
</feature>
<feature type="glycosylation site" description="N-linked (GlcNAc...) asparagine" evidence="3">
    <location>
        <position position="86"/>
    </location>
</feature>
<feature type="disulfide bond" evidence="2">
    <location>
        <begin position="289"/>
        <end position="312"/>
    </location>
</feature>
<feature type="disulfide bond" evidence="2">
    <location>
        <begin position="301"/>
        <end position="309"/>
    </location>
</feature>
<comment type="function">
    <text evidence="1">Nutrient transporter (By similarity). Involved in maintaining the osmotic homeostasis of the digestive vacuole (By similarity).</text>
</comment>
<comment type="subcellular location">
    <subcellularLocation>
        <location evidence="1">Vacuole membrane</location>
        <topology evidence="3">Multi-pass membrane protein</topology>
    </subcellularLocation>
    <text evidence="1">Localizes to the parasite digestive vacuole, the site of chloroquine action.</text>
</comment>
<comment type="similarity">
    <text evidence="4">Belongs to the CRT-like transporter family.</text>
</comment>
<organism>
    <name type="scientific">Plasmodium yoelii yoelii</name>
    <dbReference type="NCBI Taxonomy" id="73239"/>
    <lineage>
        <taxon>Eukaryota</taxon>
        <taxon>Sar</taxon>
        <taxon>Alveolata</taxon>
        <taxon>Apicomplexa</taxon>
        <taxon>Aconoidasida</taxon>
        <taxon>Haemosporida</taxon>
        <taxon>Plasmodiidae</taxon>
        <taxon>Plasmodium</taxon>
        <taxon>Plasmodium (Vinckeia)</taxon>
    </lineage>
</organism>
<protein>
    <recommendedName>
        <fullName>Putative chloroquine resistance transporter</fullName>
    </recommendedName>
    <alternativeName>
        <fullName>Probable transporter cg10</fullName>
        <shortName>cg10</shortName>
    </alternativeName>
</protein>
<sequence length="424" mass="48753">MTVIKKGKNKKKNLKNDDRYKELDSLITNGSEIGDNSGRSCIKRFFKIIGNEMKNNVYVYFLSILYLCVCVMNKVFAKRTLNKMGNYSFVTSETHNIICIVVFQLLYFIYRKTSTSGYKNESQKNFGWQFFLISLLDASTVIISMIGLTRTTGNIQSFIMQLIIPVNMYFCFMFLGYRYHLFNYLGAFIILITIAVVETFLSFETQSENSIIFNLIMISALIPLSFSNMTREVVFKKHKINILRLNAMVVLFQFFTSLLVLPVYNIPFLKEIYMPFSEMSTNINNGLRCLFYGQNTVVENCGVGMVKMCDNCEGAWKTFITFSFFNICDNLLACYIIDKFSTMTYTIVSCIQGPAITIAYYFKFLAGDAVRKPRILDFLTLFGYLFGTIIYRIGNIILEKKKMVKSQNSNDSEAELTCIETSTA</sequence>
<dbReference type="EMBL" id="AABL01001583">
    <property type="protein sequence ID" value="EAA17025.1"/>
    <property type="molecule type" value="Genomic_DNA"/>
</dbReference>
<dbReference type="SMR" id="Q7REK3"/>
<dbReference type="STRING" id="73239.Q7REK3"/>
<dbReference type="PaxDb" id="73239-Q7REK3"/>
<dbReference type="EnsemblProtists" id="EAA17025">
    <property type="protein sequence ID" value="EAA17025"/>
    <property type="gene ID" value="EAA17025"/>
</dbReference>
<dbReference type="KEGG" id="pyo:PY17X_1222700"/>
<dbReference type="InParanoid" id="Q7REK3"/>
<dbReference type="Proteomes" id="UP000008553">
    <property type="component" value="Unassembled WGS sequence"/>
</dbReference>
<dbReference type="GO" id="GO:0005774">
    <property type="term" value="C:vacuolar membrane"/>
    <property type="evidence" value="ECO:0007669"/>
    <property type="project" value="UniProtKB-SubCell"/>
</dbReference>
<dbReference type="GO" id="GO:0042910">
    <property type="term" value="F:xenobiotic transmembrane transporter activity"/>
    <property type="evidence" value="ECO:0007669"/>
    <property type="project" value="InterPro"/>
</dbReference>
<dbReference type="GO" id="GO:0006865">
    <property type="term" value="P:amino acid transport"/>
    <property type="evidence" value="ECO:0007669"/>
    <property type="project" value="UniProtKB-KW"/>
</dbReference>
<dbReference type="InterPro" id="IPR013936">
    <property type="entry name" value="CRT-like"/>
</dbReference>
<dbReference type="InterPro" id="IPR017258">
    <property type="entry name" value="Transprt_Chloroquine"/>
</dbReference>
<dbReference type="PANTHER" id="PTHR31326">
    <property type="entry name" value="PROTEIN CLT2, CHLOROPLASTIC"/>
    <property type="match status" value="1"/>
</dbReference>
<dbReference type="PANTHER" id="PTHR31326:SF1">
    <property type="entry name" value="PROTEIN CLT2, CHLOROPLASTIC"/>
    <property type="match status" value="1"/>
</dbReference>
<dbReference type="Pfam" id="PF08627">
    <property type="entry name" value="CRT-like"/>
    <property type="match status" value="1"/>
</dbReference>
<dbReference type="PIRSF" id="PIRSF037671">
    <property type="entry name" value="Transprt_Chloroquine_res"/>
    <property type="match status" value="1"/>
</dbReference>
<accession>Q7REK3</accession>